<comment type="function">
    <text evidence="1">Catalyzes the isomerization between 2-isopropylmalate and 3-isopropylmalate, via the formation of 2-isopropylmaleate.</text>
</comment>
<comment type="catalytic activity">
    <reaction evidence="1">
        <text>(2R,3S)-3-isopropylmalate = (2S)-2-isopropylmalate</text>
        <dbReference type="Rhea" id="RHEA:32287"/>
        <dbReference type="ChEBI" id="CHEBI:1178"/>
        <dbReference type="ChEBI" id="CHEBI:35121"/>
        <dbReference type="EC" id="4.2.1.33"/>
    </reaction>
</comment>
<comment type="cofactor">
    <cofactor evidence="1">
        <name>[4Fe-4S] cluster</name>
        <dbReference type="ChEBI" id="CHEBI:49883"/>
    </cofactor>
    <text evidence="1">Binds 1 [4Fe-4S] cluster per subunit.</text>
</comment>
<comment type="pathway">
    <text evidence="1">Amino-acid biosynthesis; L-leucine biosynthesis; L-leucine from 3-methyl-2-oxobutanoate: step 2/4.</text>
</comment>
<comment type="subunit">
    <text evidence="1">Heterodimer of LeuC and LeuD.</text>
</comment>
<comment type="similarity">
    <text evidence="1">Belongs to the aconitase/IPM isomerase family. LeuC type 1 subfamily.</text>
</comment>
<proteinExistence type="inferred from homology"/>
<accession>A1B513</accession>
<dbReference type="EC" id="4.2.1.33" evidence="1"/>
<dbReference type="EMBL" id="CP000489">
    <property type="protein sequence ID" value="ABL70607.1"/>
    <property type="molecule type" value="Genomic_DNA"/>
</dbReference>
<dbReference type="RefSeq" id="WP_011748800.1">
    <property type="nucleotide sequence ID" value="NC_008686.1"/>
</dbReference>
<dbReference type="SMR" id="A1B513"/>
<dbReference type="STRING" id="318586.Pden_2520"/>
<dbReference type="EnsemblBacteria" id="ABL70607">
    <property type="protein sequence ID" value="ABL70607"/>
    <property type="gene ID" value="Pden_2520"/>
</dbReference>
<dbReference type="GeneID" id="93450913"/>
<dbReference type="KEGG" id="pde:Pden_2520"/>
<dbReference type="eggNOG" id="COG0065">
    <property type="taxonomic scope" value="Bacteria"/>
</dbReference>
<dbReference type="HOGENOM" id="CLU_006714_3_4_5"/>
<dbReference type="OrthoDB" id="9802769at2"/>
<dbReference type="UniPathway" id="UPA00048">
    <property type="reaction ID" value="UER00071"/>
</dbReference>
<dbReference type="Proteomes" id="UP000000361">
    <property type="component" value="Chromosome 1"/>
</dbReference>
<dbReference type="GO" id="GO:0003861">
    <property type="term" value="F:3-isopropylmalate dehydratase activity"/>
    <property type="evidence" value="ECO:0007669"/>
    <property type="project" value="UniProtKB-UniRule"/>
</dbReference>
<dbReference type="GO" id="GO:0051539">
    <property type="term" value="F:4 iron, 4 sulfur cluster binding"/>
    <property type="evidence" value="ECO:0007669"/>
    <property type="project" value="UniProtKB-KW"/>
</dbReference>
<dbReference type="GO" id="GO:0046872">
    <property type="term" value="F:metal ion binding"/>
    <property type="evidence" value="ECO:0007669"/>
    <property type="project" value="UniProtKB-KW"/>
</dbReference>
<dbReference type="GO" id="GO:0009098">
    <property type="term" value="P:L-leucine biosynthetic process"/>
    <property type="evidence" value="ECO:0007669"/>
    <property type="project" value="UniProtKB-UniRule"/>
</dbReference>
<dbReference type="CDD" id="cd01583">
    <property type="entry name" value="IPMI"/>
    <property type="match status" value="1"/>
</dbReference>
<dbReference type="FunFam" id="3.30.499.10:FF:000006">
    <property type="entry name" value="3-isopropylmalate dehydratase large subunit"/>
    <property type="match status" value="1"/>
</dbReference>
<dbReference type="FunFam" id="3.30.499.10:FF:000007">
    <property type="entry name" value="3-isopropylmalate dehydratase large subunit"/>
    <property type="match status" value="1"/>
</dbReference>
<dbReference type="Gene3D" id="3.30.499.10">
    <property type="entry name" value="Aconitase, domain 3"/>
    <property type="match status" value="2"/>
</dbReference>
<dbReference type="HAMAP" id="MF_01026">
    <property type="entry name" value="LeuC_type1"/>
    <property type="match status" value="1"/>
</dbReference>
<dbReference type="InterPro" id="IPR004430">
    <property type="entry name" value="3-IsopropMal_deHydase_lsu"/>
</dbReference>
<dbReference type="InterPro" id="IPR015931">
    <property type="entry name" value="Acnase/IPM_dHydase_lsu_aba_1/3"/>
</dbReference>
<dbReference type="InterPro" id="IPR001030">
    <property type="entry name" value="Acoase/IPM_deHydtase_lsu_aba"/>
</dbReference>
<dbReference type="InterPro" id="IPR018136">
    <property type="entry name" value="Aconitase_4Fe-4S_BS"/>
</dbReference>
<dbReference type="InterPro" id="IPR036008">
    <property type="entry name" value="Aconitase_4Fe-4S_dom"/>
</dbReference>
<dbReference type="InterPro" id="IPR050067">
    <property type="entry name" value="IPM_dehydratase_rel_enz"/>
</dbReference>
<dbReference type="InterPro" id="IPR033941">
    <property type="entry name" value="IPMI_cat"/>
</dbReference>
<dbReference type="NCBIfam" id="TIGR00170">
    <property type="entry name" value="leuC"/>
    <property type="match status" value="1"/>
</dbReference>
<dbReference type="NCBIfam" id="NF004016">
    <property type="entry name" value="PRK05478.1"/>
    <property type="match status" value="1"/>
</dbReference>
<dbReference type="NCBIfam" id="NF009116">
    <property type="entry name" value="PRK12466.1"/>
    <property type="match status" value="1"/>
</dbReference>
<dbReference type="PANTHER" id="PTHR43822:SF9">
    <property type="entry name" value="3-ISOPROPYLMALATE DEHYDRATASE"/>
    <property type="match status" value="1"/>
</dbReference>
<dbReference type="PANTHER" id="PTHR43822">
    <property type="entry name" value="HOMOACONITASE, MITOCHONDRIAL-RELATED"/>
    <property type="match status" value="1"/>
</dbReference>
<dbReference type="Pfam" id="PF00330">
    <property type="entry name" value="Aconitase"/>
    <property type="match status" value="1"/>
</dbReference>
<dbReference type="PRINTS" id="PR00415">
    <property type="entry name" value="ACONITASE"/>
</dbReference>
<dbReference type="SUPFAM" id="SSF53732">
    <property type="entry name" value="Aconitase iron-sulfur domain"/>
    <property type="match status" value="1"/>
</dbReference>
<dbReference type="PROSITE" id="PS00450">
    <property type="entry name" value="ACONITASE_1"/>
    <property type="match status" value="1"/>
</dbReference>
<dbReference type="PROSITE" id="PS01244">
    <property type="entry name" value="ACONITASE_2"/>
    <property type="match status" value="1"/>
</dbReference>
<keyword id="KW-0004">4Fe-4S</keyword>
<keyword id="KW-0028">Amino-acid biosynthesis</keyword>
<keyword id="KW-0100">Branched-chain amino acid biosynthesis</keyword>
<keyword id="KW-0408">Iron</keyword>
<keyword id="KW-0411">Iron-sulfur</keyword>
<keyword id="KW-0432">Leucine biosynthesis</keyword>
<keyword id="KW-0456">Lyase</keyword>
<keyword id="KW-0479">Metal-binding</keyword>
<keyword id="KW-1185">Reference proteome</keyword>
<protein>
    <recommendedName>
        <fullName evidence="1">3-isopropylmalate dehydratase large subunit</fullName>
        <ecNumber evidence="1">4.2.1.33</ecNumber>
    </recommendedName>
    <alternativeName>
        <fullName evidence="1">Alpha-IPM isomerase</fullName>
        <shortName evidence="1">IPMI</shortName>
    </alternativeName>
    <alternativeName>
        <fullName evidence="1">Isopropylmalate isomerase</fullName>
    </alternativeName>
</protein>
<name>LEUC_PARDP</name>
<organism>
    <name type="scientific">Paracoccus denitrificans (strain Pd 1222)</name>
    <dbReference type="NCBI Taxonomy" id="318586"/>
    <lineage>
        <taxon>Bacteria</taxon>
        <taxon>Pseudomonadati</taxon>
        <taxon>Pseudomonadota</taxon>
        <taxon>Alphaproteobacteria</taxon>
        <taxon>Rhodobacterales</taxon>
        <taxon>Paracoccaceae</taxon>
        <taxon>Paracoccus</taxon>
    </lineage>
</organism>
<gene>
    <name evidence="1" type="primary">leuC</name>
    <name type="ordered locus">Pden_2520</name>
</gene>
<evidence type="ECO:0000255" key="1">
    <source>
        <dbReference type="HAMAP-Rule" id="MF_01026"/>
    </source>
</evidence>
<reference key="1">
    <citation type="submission" date="2006-12" db="EMBL/GenBank/DDBJ databases">
        <title>Complete sequence of chromosome 1 of Paracoccus denitrificans PD1222.</title>
        <authorList>
            <person name="Copeland A."/>
            <person name="Lucas S."/>
            <person name="Lapidus A."/>
            <person name="Barry K."/>
            <person name="Detter J.C."/>
            <person name="Glavina del Rio T."/>
            <person name="Hammon N."/>
            <person name="Israni S."/>
            <person name="Dalin E."/>
            <person name="Tice H."/>
            <person name="Pitluck S."/>
            <person name="Munk A.C."/>
            <person name="Brettin T."/>
            <person name="Bruce D."/>
            <person name="Han C."/>
            <person name="Tapia R."/>
            <person name="Gilna P."/>
            <person name="Schmutz J."/>
            <person name="Larimer F."/>
            <person name="Land M."/>
            <person name="Hauser L."/>
            <person name="Kyrpides N."/>
            <person name="Lykidis A."/>
            <person name="Spiro S."/>
            <person name="Richardson D.J."/>
            <person name="Moir J.W.B."/>
            <person name="Ferguson S.J."/>
            <person name="van Spanning R.J.M."/>
            <person name="Richardson P."/>
        </authorList>
    </citation>
    <scope>NUCLEOTIDE SEQUENCE [LARGE SCALE GENOMIC DNA]</scope>
    <source>
        <strain>Pd 1222</strain>
    </source>
</reference>
<sequence length="478" mass="51333">MTGNTNAGAPRTLYDKIFDAHVVERSDDGTCILYIDRHLVHEVTSPQAFEGLRMAGRKVRRPDQTIAVPDHNVPTTPDRVNGIENPEGRIQVAELDKNAREFGLNYYPMSDIRQGIVHIVGPEQGWTLPGMTVVCGDSHTATHGAFGALAHGIGTSEVEHVLATQTLIQKKSRNMKVEITGKLRPGVTAKDITLSVIGATGTAGGTGYVIEYCGEAIRDLSMEGRMTVCNMAIEGGARAGLIAPDEKTFEYVKGRPHAPKGAAWEAAQAWWKTLFSDEGAHWDKVVTIRGEDIAPVVTWGTSPEDVLPITGKVPAPEDFEGGKVEAARRSLDYMGLKPGTPLNEIRIDAVFIGSCTNGRIEDLRAAAGILKGHKLAPGVRGMVVPGSGLVRMQAEEEGLDNIFIDAGFEWRLAGCSMCLGMNPDQLAPGERCAATSNRNFEGRMGRGGRTHLMSPVMAAAAGIKGHLTDVRELLAETV</sequence>
<feature type="chain" id="PRO_0000319825" description="3-isopropylmalate dehydratase large subunit">
    <location>
        <begin position="1"/>
        <end position="478"/>
    </location>
</feature>
<feature type="binding site" evidence="1">
    <location>
        <position position="355"/>
    </location>
    <ligand>
        <name>[4Fe-4S] cluster</name>
        <dbReference type="ChEBI" id="CHEBI:49883"/>
    </ligand>
</feature>
<feature type="binding site" evidence="1">
    <location>
        <position position="415"/>
    </location>
    <ligand>
        <name>[4Fe-4S] cluster</name>
        <dbReference type="ChEBI" id="CHEBI:49883"/>
    </ligand>
</feature>
<feature type="binding site" evidence="1">
    <location>
        <position position="418"/>
    </location>
    <ligand>
        <name>[4Fe-4S] cluster</name>
        <dbReference type="ChEBI" id="CHEBI:49883"/>
    </ligand>
</feature>